<name>MTR1L_HUMAN</name>
<evidence type="ECO:0000250" key="1">
    <source>
        <dbReference type="UniProtKB" id="O88495"/>
    </source>
</evidence>
<evidence type="ECO:0000255" key="2"/>
<evidence type="ECO:0000255" key="3">
    <source>
        <dbReference type="PROSITE-ProRule" id="PRU00521"/>
    </source>
</evidence>
<evidence type="ECO:0000256" key="4">
    <source>
        <dbReference type="SAM" id="MobiDB-lite"/>
    </source>
</evidence>
<evidence type="ECO:0000269" key="5">
    <source>
    </source>
</evidence>
<evidence type="ECO:0000269" key="6">
    <source>
    </source>
</evidence>
<evidence type="ECO:0000269" key="7">
    <source>
    </source>
</evidence>
<evidence type="ECO:0000269" key="8">
    <source>
    </source>
</evidence>
<evidence type="ECO:0000269" key="9">
    <source>
    </source>
</evidence>
<evidence type="ECO:0000269" key="10">
    <source>
    </source>
</evidence>
<evidence type="ECO:0000269" key="11">
    <source>
    </source>
</evidence>
<evidence type="ECO:0000269" key="12">
    <source ref="2"/>
</evidence>
<evidence type="ECO:0000303" key="13">
    <source>
    </source>
</evidence>
<evidence type="ECO:0000305" key="14"/>
<accession>Q13585</accession>
<accession>Q0VGG3</accession>
<accession>Q3ZAR0</accession>
<proteinExistence type="evidence at protein level"/>
<reference key="1">
    <citation type="journal article" date="1996" name="FEBS Lett.">
        <title>Cloning of a melatonin-related receptor from human pituitary.</title>
        <authorList>
            <person name="Reppert S.M."/>
            <person name="Weaver D.R."/>
            <person name="Ebisawa T."/>
            <person name="Mahle C.D."/>
            <person name="Kolakowski L.F. Jr."/>
        </authorList>
    </citation>
    <scope>NUCLEOTIDE SEQUENCE [MRNA]</scope>
    <scope>VARIANTS 502-THR--HIS-505 DEL; ALA-532 AND VAL-606</scope>
    <source>
        <tissue>Pituitary</tissue>
    </source>
</reference>
<reference key="2">
    <citation type="submission" date="2007-12" db="EMBL/GenBank/DDBJ databases">
        <authorList>
            <person name="Kaighin V.A."/>
            <person name="Martin A.L."/>
            <person name="Aronstam R.S."/>
        </authorList>
    </citation>
    <scope>NUCLEOTIDE SEQUENCE [MRNA]</scope>
    <scope>VARIANTS 502-THR--HIS-505 DEL AND ALA-532</scope>
    <source>
        <tissue>Pituitary</tissue>
    </source>
</reference>
<reference key="3">
    <citation type="journal article" date="2004" name="Genome Res.">
        <title>The status, quality, and expansion of the NIH full-length cDNA project: the Mammalian Gene Collection (MGC).</title>
        <authorList>
            <consortium name="The MGC Project Team"/>
        </authorList>
    </citation>
    <scope>NUCLEOTIDE SEQUENCE [LARGE SCALE MRNA]</scope>
    <scope>VARIANTS 502-THR--HIS-505 DEL; ALA-532 AND VAL-606</scope>
</reference>
<reference key="4">
    <citation type="journal article" date="2006" name="EMBO J.">
        <title>The orphan GPR50 receptor specifically inhibits MT1 melatonin receptor function through heterodimerization.</title>
        <authorList>
            <person name="Levoye A."/>
            <person name="Dam J."/>
            <person name="Ayoub M.A."/>
            <person name="Guillaume J.L."/>
            <person name="Couturier C."/>
            <person name="Delagrange P."/>
            <person name="Jockers R."/>
        </authorList>
    </citation>
    <scope>SUBUNIT</scope>
    <scope>FUNCTION</scope>
</reference>
<reference key="5">
    <citation type="journal article" date="2006" name="J. Lipid Res.">
        <title>Sequence variants in the melatonin-related receptor gene (GPR50) associate with circulating triglyceride and HDL levels.</title>
        <authorList>
            <person name="Bhattacharyya S."/>
            <person name="Luan J."/>
            <person name="Challis B."/>
            <person name="Keogh J."/>
            <person name="Montague C."/>
            <person name="Brennand J."/>
            <person name="Morten J."/>
            <person name="Lowenbeim S."/>
            <person name="Jenkins S."/>
            <person name="Farooqi I.S."/>
            <person name="Wareham N.J."/>
            <person name="O'Rahilly S."/>
        </authorList>
    </citation>
    <scope>VARIANTS 502-THR--HIS-505 DEL; ALA-528 AND ILE-606</scope>
</reference>
<reference key="6">
    <citation type="journal article" date="2009" name="Mol. Cell. Neurosci.">
        <title>GPR50 interacts with neuronal NOGO-A and affects neurite outgrowth.</title>
        <authorList>
            <person name="Gruenewald E."/>
            <person name="Kinnell H.L."/>
            <person name="Porteous D.J."/>
            <person name="Thomson P.A."/>
        </authorList>
    </citation>
    <scope>INTERACTION WITH RTN4</scope>
    <scope>SUBCELLULAR LOCATION</scope>
    <scope>FUNCTION</scope>
</reference>
<reference key="7">
    <citation type="journal article" date="2011" name="PLoS ONE">
        <title>GPR50 interacts with TIP60 to modulate glucocorticoid receptor signalling.</title>
        <authorList>
            <person name="Li J."/>
            <person name="Hand L.E."/>
            <person name="Meng Q.J."/>
            <person name="Loudon A.S."/>
            <person name="Bechtold D.A."/>
        </authorList>
    </citation>
    <scope>FUNCTION</scope>
    <scope>INTERACTION WITH KAT5</scope>
    <scope>SUBCELLULAR LOCATION</scope>
</reference>
<reference key="8">
    <citation type="journal article" date="2018" name="Nat. Commun.">
        <title>The orphan GPR50 receptor promotes constitutive TGFbeta receptor signaling and protects against cancer development.</title>
        <authorList>
            <person name="Wojciech S."/>
            <person name="Ahmad R."/>
            <person name="Belaid-Choucair Z."/>
            <person name="Journe A.S."/>
            <person name="Gallet S."/>
            <person name="Dam J."/>
            <person name="Daulat A."/>
            <person name="Ndiaye-Lobry D."/>
            <person name="Lahuna O."/>
            <person name="Karamitri A."/>
            <person name="Guillaume J.L."/>
            <person name="Do Cruzeiro M."/>
            <person name="Guillonneau F."/>
            <person name="Saade A."/>
            <person name="Clement N."/>
            <person name="Courivaud T."/>
            <person name="Kaabi N."/>
            <person name="Tadagaki K."/>
            <person name="Delagrange P."/>
            <person name="Prevot V."/>
            <person name="Hermine O."/>
            <person name="Prunier C."/>
            <person name="Jockers R."/>
        </authorList>
    </citation>
    <scope>FUNCTION</scope>
    <scope>INTERACTION WITH TGFBR1</scope>
    <scope>INDUCTION BY TGFB</scope>
</reference>
<reference key="9">
    <citation type="journal article" date="2020" name="Cell. Mol. Life Sci.">
        <title>GPR50-Ctail cleavage and nuclear translocation: a new signal transduction mode for G protein-coupled receptors.</title>
        <authorList>
            <person name="Ahmad R."/>
            <person name="Lahuna O."/>
            <person name="Sidibe A."/>
            <person name="Daulat A."/>
            <person name="Zhang Q."/>
            <person name="Luka M."/>
            <person name="Guillaume J.L."/>
            <person name="Gallet S."/>
            <person name="Guillonneau F."/>
            <person name="Hamroune J."/>
            <person name="Polo S."/>
            <person name="Prevot V."/>
            <person name="Delagrange P."/>
            <person name="Dam J."/>
            <person name="Jockers R."/>
        </authorList>
    </citation>
    <scope>FUNCTION (GPR50 C-TERMINAL DOMAIN)</scope>
    <scope>CLEAVAGE</scope>
    <scope>SUBCELLULAR LOCATION (GPR50 C-TERMINAL DOMAIN)</scope>
    <scope>INTERACTION WITH GTF2I (GPR50 C-TERMINAL DOMAIN)</scope>
</reference>
<keyword id="KW-1003">Cell membrane</keyword>
<keyword id="KW-1015">Disulfide bond</keyword>
<keyword id="KW-0297">G-protein coupled receptor</keyword>
<keyword id="KW-0472">Membrane</keyword>
<keyword id="KW-0539">Nucleus</keyword>
<keyword id="KW-1267">Proteomics identification</keyword>
<keyword id="KW-0675">Receptor</keyword>
<keyword id="KW-1185">Reference proteome</keyword>
<keyword id="KW-0770">Synapse</keyword>
<keyword id="KW-0807">Transducer</keyword>
<keyword id="KW-0812">Transmembrane</keyword>
<keyword id="KW-1133">Transmembrane helix</keyword>
<feature type="chain" id="PRO_0000069878" description="Melatonin-related receptor">
    <location>
        <begin position="1"/>
        <end position="617"/>
    </location>
</feature>
<feature type="chain" id="PRO_0000459500" description="C-terminal domain">
    <location>
        <begin position="409"/>
        <end position="617"/>
    </location>
</feature>
<feature type="topological domain" description="Extracellular" evidence="2">
    <location>
        <begin position="1"/>
        <end position="30"/>
    </location>
</feature>
<feature type="transmembrane region" description="Helical; Name=1" evidence="2">
    <location>
        <begin position="31"/>
        <end position="51"/>
    </location>
</feature>
<feature type="topological domain" description="Cytoplasmic" evidence="2">
    <location>
        <begin position="52"/>
        <end position="64"/>
    </location>
</feature>
<feature type="transmembrane region" description="Helical; Name=2" evidence="2">
    <location>
        <begin position="65"/>
        <end position="85"/>
    </location>
</feature>
<feature type="topological domain" description="Extracellular" evidence="2">
    <location>
        <begin position="86"/>
        <end position="103"/>
    </location>
</feature>
<feature type="transmembrane region" description="Helical; Name=3" evidence="2">
    <location>
        <begin position="104"/>
        <end position="124"/>
    </location>
</feature>
<feature type="topological domain" description="Cytoplasmic" evidence="2">
    <location>
        <begin position="125"/>
        <end position="143"/>
    </location>
</feature>
<feature type="transmembrane region" description="Helical; Name=4" evidence="2">
    <location>
        <begin position="144"/>
        <end position="164"/>
    </location>
</feature>
<feature type="topological domain" description="Extracellular" evidence="2">
    <location>
        <begin position="165"/>
        <end position="188"/>
    </location>
</feature>
<feature type="transmembrane region" description="Helical; Name=5" evidence="2">
    <location>
        <begin position="189"/>
        <end position="209"/>
    </location>
</feature>
<feature type="topological domain" description="Cytoplasmic" evidence="2">
    <location>
        <begin position="210"/>
        <end position="239"/>
    </location>
</feature>
<feature type="transmembrane region" description="Helical; Name=6" evidence="2">
    <location>
        <begin position="240"/>
        <end position="260"/>
    </location>
</feature>
<feature type="topological domain" description="Extracellular" evidence="2">
    <location>
        <begin position="261"/>
        <end position="273"/>
    </location>
</feature>
<feature type="transmembrane region" description="Helical; Name=7" evidence="2">
    <location>
        <begin position="274"/>
        <end position="294"/>
    </location>
</feature>
<feature type="topological domain" description="Cytoplasmic" evidence="2">
    <location>
        <begin position="295"/>
        <end position="617"/>
    </location>
</feature>
<feature type="region of interest" description="Disordered" evidence="4">
    <location>
        <begin position="340"/>
        <end position="438"/>
    </location>
</feature>
<feature type="region of interest" description="Disordered" evidence="4">
    <location>
        <begin position="464"/>
        <end position="596"/>
    </location>
</feature>
<feature type="compositionally biased region" description="Basic and acidic residues" evidence="4">
    <location>
        <begin position="341"/>
        <end position="353"/>
    </location>
</feature>
<feature type="compositionally biased region" description="Polar residues" evidence="4">
    <location>
        <begin position="485"/>
        <end position="500"/>
    </location>
</feature>
<feature type="site" description="Cleavage; by Calpain-1/CAPN1" evidence="10">
    <location>
        <begin position="408"/>
        <end position="409"/>
    </location>
</feature>
<feature type="disulfide bond" evidence="3">
    <location>
        <begin position="101"/>
        <end position="178"/>
    </location>
</feature>
<feature type="sequence variant" id="VAR_062254" description="Lower fasting circulating triglyceride levels." evidence="5 11 12">
    <location>
        <begin position="502"/>
        <end position="505"/>
    </location>
</feature>
<feature type="sequence variant" id="VAR_062255" description="Higher fasting circulating triglyceride levels; dbSNP:rs561077." evidence="5 11 12">
    <original>T</original>
    <variation>A</variation>
    <location>
        <position position="532"/>
    </location>
</feature>
<feature type="sequence variant" id="VAR_062256" description="Higher fasting circulating triglyceride levels; dbSNP:rs13440581." evidence="5 11">
    <original>I</original>
    <variation>V</variation>
    <location>
        <position position="606"/>
    </location>
</feature>
<feature type="sequence conflict" description="In Ref. 1; AAC50614." evidence="14" ref="1">
    <original>S</original>
    <variation>P</variation>
    <location>
        <position position="320"/>
    </location>
</feature>
<feature type="sequence conflict" description="In Ref. 1; AAC50614." evidence="14" ref="1">
    <original>A</original>
    <variation>G</variation>
    <location>
        <position position="448"/>
    </location>
</feature>
<organism>
    <name type="scientific">Homo sapiens</name>
    <name type="common">Human</name>
    <dbReference type="NCBI Taxonomy" id="9606"/>
    <lineage>
        <taxon>Eukaryota</taxon>
        <taxon>Metazoa</taxon>
        <taxon>Chordata</taxon>
        <taxon>Craniata</taxon>
        <taxon>Vertebrata</taxon>
        <taxon>Euteleostomi</taxon>
        <taxon>Mammalia</taxon>
        <taxon>Eutheria</taxon>
        <taxon>Euarchontoglires</taxon>
        <taxon>Primates</taxon>
        <taxon>Haplorrhini</taxon>
        <taxon>Catarrhini</taxon>
        <taxon>Hominidae</taxon>
        <taxon>Homo</taxon>
    </lineage>
</organism>
<comment type="function">
    <text evidence="1 6 7 8 9">G protein-coupled receptor that plays a role in numerous physiological processes including regulation of energy metabolism, neurite outgrowth or cell migration (PubMed:19699797). Promotes self-renewal and neuronal differentiation of neural progenitor cells through activation of the NOTCH and WNT/beta-catenin signaling pathways (By similarity). Modulates the KAT5-dependent glucocorticoid receptor signaling by modulating KAT5 subcellular compartmentalisation (PubMed:21858214). Also plays a role in the activation TGFBR1 in the absence of TGFBR2 by interfering with FKBP1A binding to TGFBR1, leading to induction of both canonical and non-canonical SMAD signaling pathways resulting in inhibition of proliferation or promotion of migration (PubMed:29572483).</text>
</comment>
<comment type="function">
    <molecule>C-terminal domain</molecule>
    <text evidence="1 7 8 10">Upon cleavage by CAPN1, functions as a scaffold in the nucleus for interacting partners such as GTF2I to promote FOS promoter activation.</text>
</comment>
<comment type="subunit">
    <text evidence="6 7 8 9">Homodimer, and heterodimer with MTNR1A and MTNR1B. Interacts with KAT5 (PubMed:21858214). Interacts with RTN4 isoform A/NOGO-A (PubMed:19699797). Interacts with TGFBR1 (PubMed:29572483).</text>
</comment>
<comment type="subunit">
    <molecule>C-terminal domain</molecule>
    <text evidence="10">Interacts with GTF2I.</text>
</comment>
<comment type="interaction">
    <interactant intactId="EBI-8550965">
        <id>Q13585</id>
    </interactant>
    <interactant intactId="EBI-78188">
        <id>P78536</id>
        <label>ADAM17</label>
    </interactant>
    <organismsDiffer>false</organismsDiffer>
    <experiments>2</experiments>
</comment>
<comment type="interaction">
    <interactant intactId="EBI-8550965">
        <id>Q13585</id>
    </interactant>
    <interactant intactId="EBI-8045030">
        <id>P04731</id>
        <label>MT1A</label>
    </interactant>
    <organismsDiffer>false</organismsDiffer>
    <experiments>3</experiments>
</comment>
<comment type="interaction">
    <interactant intactId="EBI-8550965">
        <id>Q13585</id>
    </interactant>
    <interactant intactId="EBI-10172590">
        <id>Q7Z3I7</id>
        <label>ZNF572</label>
    </interactant>
    <organismsDiffer>false</organismsDiffer>
    <experiments>3</experiments>
</comment>
<comment type="subcellular location">
    <subcellularLocation>
        <location evidence="8">Cell membrane</location>
        <topology>Multi-pass membrane protein</topology>
    </subcellularLocation>
    <subcellularLocation>
        <location evidence="7">Postsynaptic density</location>
    </subcellularLocation>
</comment>
<comment type="subcellular location">
    <molecule>C-terminal domain</molecule>
    <subcellularLocation>
        <location evidence="10">Nucleus</location>
    </subcellularLocation>
</comment>
<comment type="tissue specificity">
    <text>Hypothalamus and pituitary.</text>
</comment>
<comment type="induction">
    <text evidence="9">By TGFB.</text>
</comment>
<comment type="PTM">
    <text evidence="10">Cleaved by CAPN1 in a calcium-dependent manner.</text>
</comment>
<comment type="similarity">
    <text evidence="3">Belongs to the G-protein coupled receptor 1 family.</text>
</comment>
<gene>
    <name type="primary">GPR50</name>
</gene>
<sequence length="617" mass="67369">MGPTLAVPTPYGCIGCKLPQPEYPPALIIFMFCAMVITIVVDLIGNSMVILAVTKNKKLRNSGNIFVVSLSVADMLVAIYPYPLMLHAMSIGGWDLSQLQCQMVGFITGLSVVGSIFNIVAIAINRYCYICHSLQYERIFSVRNTCIYLVITWIMTVLAVLPNMYIGTIEYDPRTYTCIFNYLNNPVFTVTIVCIHFVLPLLIVGFCYVRIWTKVLAARDPAGQNPDNQLAEVRNFLTMFVIFLLFAVCWCPINVLTVLVAVSPKEMAGKIPNWLYLAAYFIAYFNSCLNAVIYGLLNENFRREYWTIFHAMRHPIIFFSGLISDIREMQEARTLARARAHARDQAREQDRAHACPAVEETPMNVRNVPLPGDAAAGHPDRASGHPKPHSRSSSAYRKSASTHHKSVFSHSKAASGHLKPVSGHSKPASGHPKSATVYPKPASVHFKADSVHFKGDSVHFKPDSVHFKPASSNPKPITGHHVSAGSHSKSAFSAATSHPKPTTGHIKPATSHAEPTTADYPKPATTSHPKPTAADNPELSASHCPEIPAIAHPVSDDSDLPESASSPAAGPTKPAASQLESDTIADLPDPTVVTTSTNDYHDVVVIDVEDDPDEMAV</sequence>
<dbReference type="EMBL" id="U52219">
    <property type="protein sequence ID" value="AAC50614.1"/>
    <property type="molecule type" value="mRNA"/>
</dbReference>
<dbReference type="EMBL" id="EU432118">
    <property type="protein sequence ID" value="ABY87917.1"/>
    <property type="molecule type" value="mRNA"/>
</dbReference>
<dbReference type="EMBL" id="BC103696">
    <property type="protein sequence ID" value="AAI03697.1"/>
    <property type="molecule type" value="mRNA"/>
</dbReference>
<dbReference type="EMBL" id="BC105683">
    <property type="protein sequence ID" value="AAI05684.1"/>
    <property type="molecule type" value="mRNA"/>
</dbReference>
<dbReference type="EMBL" id="BC105684">
    <property type="protein sequence ID" value="AAI05685.1"/>
    <property type="molecule type" value="mRNA"/>
</dbReference>
<dbReference type="CCDS" id="CCDS44012.1"/>
<dbReference type="PIR" id="S70520">
    <property type="entry name" value="S70520"/>
</dbReference>
<dbReference type="RefSeq" id="NP_004215.2">
    <property type="nucleotide sequence ID" value="NM_004224.3"/>
</dbReference>
<dbReference type="SMR" id="Q13585"/>
<dbReference type="BioGRID" id="114674">
    <property type="interactions" value="61"/>
</dbReference>
<dbReference type="CORUM" id="Q13585"/>
<dbReference type="FunCoup" id="Q13585">
    <property type="interactions" value="912"/>
</dbReference>
<dbReference type="IntAct" id="Q13585">
    <property type="interactions" value="58"/>
</dbReference>
<dbReference type="MINT" id="Q13585"/>
<dbReference type="STRING" id="9606.ENSP00000218316"/>
<dbReference type="ChEMBL" id="CHEMBL3341577"/>
<dbReference type="GlyGen" id="Q13585">
    <property type="glycosylation" value="1 site"/>
</dbReference>
<dbReference type="iPTMnet" id="Q13585"/>
<dbReference type="PhosphoSitePlus" id="Q13585"/>
<dbReference type="BioMuta" id="GPR50"/>
<dbReference type="DMDM" id="296439298"/>
<dbReference type="jPOST" id="Q13585"/>
<dbReference type="MassIVE" id="Q13585"/>
<dbReference type="PaxDb" id="9606-ENSP00000218316"/>
<dbReference type="PeptideAtlas" id="Q13585"/>
<dbReference type="ProteomicsDB" id="59583"/>
<dbReference type="Pumba" id="Q13585"/>
<dbReference type="Antibodypedia" id="7082">
    <property type="antibodies" value="296 antibodies from 35 providers"/>
</dbReference>
<dbReference type="DNASU" id="9248"/>
<dbReference type="Ensembl" id="ENST00000218316.4">
    <property type="protein sequence ID" value="ENSP00000218316.3"/>
    <property type="gene ID" value="ENSG00000102195.10"/>
</dbReference>
<dbReference type="GeneID" id="9248"/>
<dbReference type="KEGG" id="hsa:9248"/>
<dbReference type="MANE-Select" id="ENST00000218316.4">
    <property type="protein sequence ID" value="ENSP00000218316.3"/>
    <property type="RefSeq nucleotide sequence ID" value="NM_004224.3"/>
    <property type="RefSeq protein sequence ID" value="NP_004215.2"/>
</dbReference>
<dbReference type="UCSC" id="uc010ntg.3">
    <property type="organism name" value="human"/>
</dbReference>
<dbReference type="AGR" id="HGNC:4506"/>
<dbReference type="CTD" id="9248"/>
<dbReference type="DisGeNET" id="9248"/>
<dbReference type="GeneCards" id="GPR50"/>
<dbReference type="HGNC" id="HGNC:4506">
    <property type="gene designation" value="GPR50"/>
</dbReference>
<dbReference type="HPA" id="ENSG00000102195">
    <property type="expression patterns" value="Tissue enriched (pituitary)"/>
</dbReference>
<dbReference type="MIM" id="300207">
    <property type="type" value="gene"/>
</dbReference>
<dbReference type="neXtProt" id="NX_Q13585"/>
<dbReference type="OpenTargets" id="ENSG00000102195"/>
<dbReference type="PharmGKB" id="PA28895"/>
<dbReference type="VEuPathDB" id="HostDB:ENSG00000102195"/>
<dbReference type="eggNOG" id="KOG3656">
    <property type="taxonomic scope" value="Eukaryota"/>
</dbReference>
<dbReference type="GeneTree" id="ENSGT00940000160515"/>
<dbReference type="HOGENOM" id="CLU_468199_0_0_1"/>
<dbReference type="InParanoid" id="Q13585"/>
<dbReference type="OMA" id="VGFCYMR"/>
<dbReference type="OrthoDB" id="10044919at2759"/>
<dbReference type="PAN-GO" id="Q13585">
    <property type="GO annotations" value="3 GO annotations based on evolutionary models"/>
</dbReference>
<dbReference type="PhylomeDB" id="Q13585"/>
<dbReference type="TreeFam" id="TF331693"/>
<dbReference type="PathwayCommons" id="Q13585"/>
<dbReference type="SignaLink" id="Q13585"/>
<dbReference type="BioGRID-ORCS" id="9248">
    <property type="hits" value="11 hits in 772 CRISPR screens"/>
</dbReference>
<dbReference type="GeneWiki" id="GPR50"/>
<dbReference type="GenomeRNAi" id="9248"/>
<dbReference type="Pharos" id="Q13585">
    <property type="development level" value="Tbio"/>
</dbReference>
<dbReference type="PRO" id="PR:Q13585"/>
<dbReference type="Proteomes" id="UP000005640">
    <property type="component" value="Chromosome X"/>
</dbReference>
<dbReference type="RNAct" id="Q13585">
    <property type="molecule type" value="protein"/>
</dbReference>
<dbReference type="Bgee" id="ENSG00000102195">
    <property type="expression patterns" value="Expressed in adenohypophysis and 39 other cell types or tissues"/>
</dbReference>
<dbReference type="GO" id="GO:0005654">
    <property type="term" value="C:nucleoplasm"/>
    <property type="evidence" value="ECO:0000314"/>
    <property type="project" value="HPA"/>
</dbReference>
<dbReference type="GO" id="GO:0005886">
    <property type="term" value="C:plasma membrane"/>
    <property type="evidence" value="ECO:0000314"/>
    <property type="project" value="HPA"/>
</dbReference>
<dbReference type="GO" id="GO:0014069">
    <property type="term" value="C:postsynaptic density"/>
    <property type="evidence" value="ECO:0007669"/>
    <property type="project" value="UniProtKB-SubCell"/>
</dbReference>
<dbReference type="GO" id="GO:0004930">
    <property type="term" value="F:G protein-coupled receptor activity"/>
    <property type="evidence" value="ECO:0000318"/>
    <property type="project" value="GO_Central"/>
</dbReference>
<dbReference type="GO" id="GO:0008502">
    <property type="term" value="F:melatonin receptor activity"/>
    <property type="evidence" value="ECO:0007669"/>
    <property type="project" value="InterPro"/>
</dbReference>
<dbReference type="GO" id="GO:0007267">
    <property type="term" value="P:cell-cell signaling"/>
    <property type="evidence" value="ECO:0000304"/>
    <property type="project" value="ProtInc"/>
</dbReference>
<dbReference type="GO" id="GO:0007186">
    <property type="term" value="P:G protein-coupled receptor signaling pathway"/>
    <property type="evidence" value="ECO:0000318"/>
    <property type="project" value="GO_Central"/>
</dbReference>
<dbReference type="CDD" id="cd15209">
    <property type="entry name" value="7tmA_Mel1"/>
    <property type="match status" value="1"/>
</dbReference>
<dbReference type="FunFam" id="1.20.1070.10:FF:000172">
    <property type="entry name" value="G protein-coupled receptor 50"/>
    <property type="match status" value="1"/>
</dbReference>
<dbReference type="Gene3D" id="1.20.1070.10">
    <property type="entry name" value="Rhodopsin 7-helix transmembrane proteins"/>
    <property type="match status" value="1"/>
</dbReference>
<dbReference type="InterPro" id="IPR000276">
    <property type="entry name" value="GPCR_Rhodpsn"/>
</dbReference>
<dbReference type="InterPro" id="IPR017452">
    <property type="entry name" value="GPCR_Rhodpsn_7TM"/>
</dbReference>
<dbReference type="InterPro" id="IPR002280">
    <property type="entry name" value="Mel_rcpt_1X"/>
</dbReference>
<dbReference type="InterPro" id="IPR000025">
    <property type="entry name" value="Melatonin_rcpt"/>
</dbReference>
<dbReference type="PANTHER" id="PTHR24228">
    <property type="entry name" value="B2 BRADYKININ RECEPTOR/ANGIOTENSIN II RECEPTOR"/>
    <property type="match status" value="1"/>
</dbReference>
<dbReference type="PANTHER" id="PTHR24228:SF56">
    <property type="entry name" value="MELATONIN-RELATED RECEPTOR"/>
    <property type="match status" value="1"/>
</dbReference>
<dbReference type="Pfam" id="PF00001">
    <property type="entry name" value="7tm_1"/>
    <property type="match status" value="1"/>
</dbReference>
<dbReference type="PRINTS" id="PR00237">
    <property type="entry name" value="GPCRRHODOPSN"/>
</dbReference>
<dbReference type="PRINTS" id="PR01151">
    <property type="entry name" value="MELATONIN1XR"/>
</dbReference>
<dbReference type="PRINTS" id="PR00857">
    <property type="entry name" value="MELATONINR"/>
</dbReference>
<dbReference type="SMART" id="SM01381">
    <property type="entry name" value="7TM_GPCR_Srsx"/>
    <property type="match status" value="1"/>
</dbReference>
<dbReference type="SUPFAM" id="SSF81321">
    <property type="entry name" value="Family A G protein-coupled receptor-like"/>
    <property type="match status" value="1"/>
</dbReference>
<dbReference type="PROSITE" id="PS00237">
    <property type="entry name" value="G_PROTEIN_RECEP_F1_1"/>
    <property type="match status" value="1"/>
</dbReference>
<dbReference type="PROSITE" id="PS50262">
    <property type="entry name" value="G_PROTEIN_RECEP_F1_2"/>
    <property type="match status" value="1"/>
</dbReference>
<protein>
    <recommendedName>
        <fullName>Melatonin-related receptor</fullName>
    </recommendedName>
    <alternativeName>
        <fullName>G protein-coupled receptor 50</fullName>
    </alternativeName>
    <alternativeName>
        <fullName>H9</fullName>
    </alternativeName>
    <component>
        <recommendedName>
            <fullName evidence="13">C-terminal domain</fullName>
        </recommendedName>
    </component>
</protein>